<accession>Q9PAZ0</accession>
<organism>
    <name type="scientific">Xylella fastidiosa (strain 9a5c)</name>
    <dbReference type="NCBI Taxonomy" id="160492"/>
    <lineage>
        <taxon>Bacteria</taxon>
        <taxon>Pseudomonadati</taxon>
        <taxon>Pseudomonadota</taxon>
        <taxon>Gammaproteobacteria</taxon>
        <taxon>Lysobacterales</taxon>
        <taxon>Lysobacteraceae</taxon>
        <taxon>Xylella</taxon>
    </lineage>
</organism>
<sequence length="335" mass="35324">MLLIGVAGTTLSAQEVDWLQDDAVAGVVLFKRNFASRAQIVELSAALREATPRPLLLAVDQEGGRVQRFHEGYSALPPLQGVGALYARDPEAALELAFEHAWLMASEVRASGVDLSFAPVIDLGRGNRAIGNRAFSDDPHVVAAFARAYVQGMHAAGMPVTLKHFPGHGSVLEDTHVDLAVDVRPLETLECEDLVPFAAGIAAGADAVMMAHVVYPNVAPEPAGFSAHWIEVILRGRMGFRGVVFSDDIGMAAVRGVGSVAGCVHAHLDAGCDVVLVCHPELVNDALSAVAGRRSNTAALIGLIGRGALGWDGLLADVRYGSIQSRLLERFGTST</sequence>
<name>NAGZ_XYLFA</name>
<reference key="1">
    <citation type="journal article" date="2000" name="Nature">
        <title>The genome sequence of the plant pathogen Xylella fastidiosa.</title>
        <authorList>
            <person name="Simpson A.J.G."/>
            <person name="Reinach F.C."/>
            <person name="Arruda P."/>
            <person name="Abreu F.A."/>
            <person name="Acencio M."/>
            <person name="Alvarenga R."/>
            <person name="Alves L.M.C."/>
            <person name="Araya J.E."/>
            <person name="Baia G.S."/>
            <person name="Baptista C.S."/>
            <person name="Barros M.H."/>
            <person name="Bonaccorsi E.D."/>
            <person name="Bordin S."/>
            <person name="Bove J.M."/>
            <person name="Briones M.R.S."/>
            <person name="Bueno M.R.P."/>
            <person name="Camargo A.A."/>
            <person name="Camargo L.E.A."/>
            <person name="Carraro D.M."/>
            <person name="Carrer H."/>
            <person name="Colauto N.B."/>
            <person name="Colombo C."/>
            <person name="Costa F.F."/>
            <person name="Costa M.C.R."/>
            <person name="Costa-Neto C.M."/>
            <person name="Coutinho L.L."/>
            <person name="Cristofani M."/>
            <person name="Dias-Neto E."/>
            <person name="Docena C."/>
            <person name="El-Dorry H."/>
            <person name="Facincani A.P."/>
            <person name="Ferreira A.J.S."/>
            <person name="Ferreira V.C.A."/>
            <person name="Ferro J.A."/>
            <person name="Fraga J.S."/>
            <person name="Franca S.C."/>
            <person name="Franco M.C."/>
            <person name="Frohme M."/>
            <person name="Furlan L.R."/>
            <person name="Garnier M."/>
            <person name="Goldman G.H."/>
            <person name="Goldman M.H.S."/>
            <person name="Gomes S.L."/>
            <person name="Gruber A."/>
            <person name="Ho P.L."/>
            <person name="Hoheisel J.D."/>
            <person name="Junqueira M.L."/>
            <person name="Kemper E.L."/>
            <person name="Kitajima J.P."/>
            <person name="Krieger J.E."/>
            <person name="Kuramae E.E."/>
            <person name="Laigret F."/>
            <person name="Lambais M.R."/>
            <person name="Leite L.C.C."/>
            <person name="Lemos E.G.M."/>
            <person name="Lemos M.V.F."/>
            <person name="Lopes S.A."/>
            <person name="Lopes C.R."/>
            <person name="Machado J.A."/>
            <person name="Machado M.A."/>
            <person name="Madeira A.M.B.N."/>
            <person name="Madeira H.M.F."/>
            <person name="Marino C.L."/>
            <person name="Marques M.V."/>
            <person name="Martins E.A.L."/>
            <person name="Martins E.M.F."/>
            <person name="Matsukuma A.Y."/>
            <person name="Menck C.F.M."/>
            <person name="Miracca E.C."/>
            <person name="Miyaki C.Y."/>
            <person name="Monteiro-Vitorello C.B."/>
            <person name="Moon D.H."/>
            <person name="Nagai M.A."/>
            <person name="Nascimento A.L.T.O."/>
            <person name="Netto L.E.S."/>
            <person name="Nhani A. Jr."/>
            <person name="Nobrega F.G."/>
            <person name="Nunes L.R."/>
            <person name="Oliveira M.A."/>
            <person name="de Oliveira M.C."/>
            <person name="de Oliveira R.C."/>
            <person name="Palmieri D.A."/>
            <person name="Paris A."/>
            <person name="Peixoto B.R."/>
            <person name="Pereira G.A.G."/>
            <person name="Pereira H.A. Jr."/>
            <person name="Pesquero J.B."/>
            <person name="Quaggio R.B."/>
            <person name="Roberto P.G."/>
            <person name="Rodrigues V."/>
            <person name="de Rosa A.J.M."/>
            <person name="de Rosa V.E. Jr."/>
            <person name="de Sa R.G."/>
            <person name="Santelli R.V."/>
            <person name="Sawasaki H.E."/>
            <person name="da Silva A.C.R."/>
            <person name="da Silva A.M."/>
            <person name="da Silva F.R."/>
            <person name="Silva W.A. Jr."/>
            <person name="da Silveira J.F."/>
            <person name="Silvestri M.L.Z."/>
            <person name="Siqueira W.J."/>
            <person name="de Souza A.A."/>
            <person name="de Souza A.P."/>
            <person name="Terenzi M.F."/>
            <person name="Truffi D."/>
            <person name="Tsai S.M."/>
            <person name="Tsuhako M.H."/>
            <person name="Vallada H."/>
            <person name="Van Sluys M.A."/>
            <person name="Verjovski-Almeida S."/>
            <person name="Vettore A.L."/>
            <person name="Zago M.A."/>
            <person name="Zatz M."/>
            <person name="Meidanis J."/>
            <person name="Setubal J.C."/>
        </authorList>
    </citation>
    <scope>NUCLEOTIDE SEQUENCE [LARGE SCALE GENOMIC DNA]</scope>
    <source>
        <strain>9a5c</strain>
    </source>
</reference>
<comment type="function">
    <text evidence="1">Plays a role in peptidoglycan recycling by cleaving the terminal beta-1,4-linked N-acetylglucosamine (GlcNAc) from peptide-linked peptidoglycan fragments, giving rise to free GlcNAc, anhydro-N-acetylmuramic acid and anhydro-N-acetylmuramic acid-linked peptides.</text>
</comment>
<comment type="catalytic activity">
    <reaction evidence="1">
        <text>Hydrolysis of terminal non-reducing N-acetyl-D-hexosamine residues in N-acetyl-beta-D-hexosaminides.</text>
        <dbReference type="EC" id="3.2.1.52"/>
    </reaction>
</comment>
<comment type="pathway">
    <text evidence="1">Cell wall biogenesis; peptidoglycan recycling.</text>
</comment>
<comment type="subunit">
    <text evidence="2">Monomer.</text>
</comment>
<comment type="subcellular location">
    <subcellularLocation>
        <location evidence="1">Cytoplasm</location>
    </subcellularLocation>
</comment>
<comment type="similarity">
    <text evidence="1">Belongs to the glycosyl hydrolase 3 family. NagZ subfamily.</text>
</comment>
<protein>
    <recommendedName>
        <fullName evidence="1">Beta-hexosaminidase</fullName>
        <ecNumber evidence="1">3.2.1.52</ecNumber>
    </recommendedName>
    <alternativeName>
        <fullName evidence="1">Beta-N-acetylhexosaminidase</fullName>
    </alternativeName>
    <alternativeName>
        <fullName evidence="1">N-acetyl-beta-glucosaminidase</fullName>
    </alternativeName>
</protein>
<feature type="chain" id="PRO_0000210804" description="Beta-hexosaminidase">
    <location>
        <begin position="1"/>
        <end position="335"/>
    </location>
</feature>
<feature type="active site" description="Proton donor/acceptor" evidence="1">
    <location>
        <position position="176"/>
    </location>
</feature>
<feature type="active site" description="Nucleophile" evidence="1">
    <location>
        <position position="247"/>
    </location>
</feature>
<feature type="binding site" evidence="1">
    <location>
        <position position="60"/>
    </location>
    <ligand>
        <name>substrate</name>
    </ligand>
</feature>
<feature type="binding site" evidence="1">
    <location>
        <position position="68"/>
    </location>
    <ligand>
        <name>substrate</name>
    </ligand>
</feature>
<feature type="binding site" evidence="1">
    <location>
        <position position="133"/>
    </location>
    <ligand>
        <name>substrate</name>
    </ligand>
</feature>
<feature type="binding site" evidence="1">
    <location>
        <begin position="163"/>
        <end position="164"/>
    </location>
    <ligand>
        <name>substrate</name>
    </ligand>
</feature>
<feature type="site" description="Important for catalytic activity" evidence="1">
    <location>
        <position position="174"/>
    </location>
</feature>
<proteinExistence type="inferred from homology"/>
<dbReference type="EC" id="3.2.1.52" evidence="1"/>
<dbReference type="EMBL" id="AE003849">
    <property type="protein sequence ID" value="AAF85154.1"/>
    <property type="molecule type" value="Genomic_DNA"/>
</dbReference>
<dbReference type="PIR" id="B82569">
    <property type="entry name" value="B82569"/>
</dbReference>
<dbReference type="RefSeq" id="WP_010894801.1">
    <property type="nucleotide sequence ID" value="NC_002488.3"/>
</dbReference>
<dbReference type="SMR" id="Q9PAZ0"/>
<dbReference type="STRING" id="160492.XF_2355"/>
<dbReference type="CAZy" id="GH3">
    <property type="family name" value="Glycoside Hydrolase Family 3"/>
</dbReference>
<dbReference type="KEGG" id="xfa:XF_2355"/>
<dbReference type="eggNOG" id="COG1472">
    <property type="taxonomic scope" value="Bacteria"/>
</dbReference>
<dbReference type="HOGENOM" id="CLU_008392_0_0_6"/>
<dbReference type="UniPathway" id="UPA00544"/>
<dbReference type="Proteomes" id="UP000000812">
    <property type="component" value="Chromosome"/>
</dbReference>
<dbReference type="GO" id="GO:0005737">
    <property type="term" value="C:cytoplasm"/>
    <property type="evidence" value="ECO:0007669"/>
    <property type="project" value="UniProtKB-SubCell"/>
</dbReference>
<dbReference type="GO" id="GO:0004563">
    <property type="term" value="F:beta-N-acetylhexosaminidase activity"/>
    <property type="evidence" value="ECO:0007669"/>
    <property type="project" value="UniProtKB-UniRule"/>
</dbReference>
<dbReference type="GO" id="GO:0005975">
    <property type="term" value="P:carbohydrate metabolic process"/>
    <property type="evidence" value="ECO:0007669"/>
    <property type="project" value="InterPro"/>
</dbReference>
<dbReference type="GO" id="GO:0051301">
    <property type="term" value="P:cell division"/>
    <property type="evidence" value="ECO:0007669"/>
    <property type="project" value="UniProtKB-KW"/>
</dbReference>
<dbReference type="GO" id="GO:0071555">
    <property type="term" value="P:cell wall organization"/>
    <property type="evidence" value="ECO:0007669"/>
    <property type="project" value="UniProtKB-KW"/>
</dbReference>
<dbReference type="GO" id="GO:0009252">
    <property type="term" value="P:peptidoglycan biosynthetic process"/>
    <property type="evidence" value="ECO:0007669"/>
    <property type="project" value="UniProtKB-KW"/>
</dbReference>
<dbReference type="GO" id="GO:0009254">
    <property type="term" value="P:peptidoglycan turnover"/>
    <property type="evidence" value="ECO:0007669"/>
    <property type="project" value="UniProtKB-UniRule"/>
</dbReference>
<dbReference type="GO" id="GO:0008360">
    <property type="term" value="P:regulation of cell shape"/>
    <property type="evidence" value="ECO:0007669"/>
    <property type="project" value="UniProtKB-KW"/>
</dbReference>
<dbReference type="Gene3D" id="3.20.20.300">
    <property type="entry name" value="Glycoside hydrolase, family 3, N-terminal domain"/>
    <property type="match status" value="1"/>
</dbReference>
<dbReference type="HAMAP" id="MF_00364">
    <property type="entry name" value="NagZ"/>
    <property type="match status" value="1"/>
</dbReference>
<dbReference type="InterPro" id="IPR022956">
    <property type="entry name" value="Beta_hexosaminidase_bac"/>
</dbReference>
<dbReference type="InterPro" id="IPR019800">
    <property type="entry name" value="Glyco_hydro_3_AS"/>
</dbReference>
<dbReference type="InterPro" id="IPR001764">
    <property type="entry name" value="Glyco_hydro_3_N"/>
</dbReference>
<dbReference type="InterPro" id="IPR036962">
    <property type="entry name" value="Glyco_hydro_3_N_sf"/>
</dbReference>
<dbReference type="InterPro" id="IPR017853">
    <property type="entry name" value="Glycoside_hydrolase_SF"/>
</dbReference>
<dbReference type="InterPro" id="IPR050226">
    <property type="entry name" value="NagZ_Beta-hexosaminidase"/>
</dbReference>
<dbReference type="NCBIfam" id="NF003740">
    <property type="entry name" value="PRK05337.1"/>
    <property type="match status" value="1"/>
</dbReference>
<dbReference type="PANTHER" id="PTHR30480:SF13">
    <property type="entry name" value="BETA-HEXOSAMINIDASE"/>
    <property type="match status" value="1"/>
</dbReference>
<dbReference type="PANTHER" id="PTHR30480">
    <property type="entry name" value="BETA-HEXOSAMINIDASE-RELATED"/>
    <property type="match status" value="1"/>
</dbReference>
<dbReference type="Pfam" id="PF00933">
    <property type="entry name" value="Glyco_hydro_3"/>
    <property type="match status" value="1"/>
</dbReference>
<dbReference type="SUPFAM" id="SSF51445">
    <property type="entry name" value="(Trans)glycosidases"/>
    <property type="match status" value="1"/>
</dbReference>
<dbReference type="PROSITE" id="PS00775">
    <property type="entry name" value="GLYCOSYL_HYDROL_F3"/>
    <property type="match status" value="1"/>
</dbReference>
<keyword id="KW-0131">Cell cycle</keyword>
<keyword id="KW-0132">Cell division</keyword>
<keyword id="KW-0133">Cell shape</keyword>
<keyword id="KW-0961">Cell wall biogenesis/degradation</keyword>
<keyword id="KW-0963">Cytoplasm</keyword>
<keyword id="KW-0326">Glycosidase</keyword>
<keyword id="KW-0378">Hydrolase</keyword>
<keyword id="KW-0573">Peptidoglycan synthesis</keyword>
<gene>
    <name evidence="1" type="primary">nagZ</name>
    <name type="ordered locus">XF_2355</name>
</gene>
<evidence type="ECO:0000255" key="1">
    <source>
        <dbReference type="HAMAP-Rule" id="MF_00364"/>
    </source>
</evidence>
<evidence type="ECO:0000305" key="2"/>